<feature type="chain" id="PRO_0000171457" description="Small ribosomal subunit biogenesis GTPase RsgA 1">
    <location>
        <begin position="1"/>
        <end position="370"/>
    </location>
</feature>
<feature type="domain" description="CP-type G" evidence="2">
    <location>
        <begin position="97"/>
        <end position="255"/>
    </location>
</feature>
<feature type="region of interest" description="Disordered" evidence="3">
    <location>
        <begin position="325"/>
        <end position="370"/>
    </location>
</feature>
<feature type="binding site" evidence="1">
    <location>
        <begin position="146"/>
        <end position="149"/>
    </location>
    <ligand>
        <name>GTP</name>
        <dbReference type="ChEBI" id="CHEBI:37565"/>
    </ligand>
</feature>
<feature type="binding site" evidence="1">
    <location>
        <begin position="197"/>
        <end position="205"/>
    </location>
    <ligand>
        <name>GTP</name>
        <dbReference type="ChEBI" id="CHEBI:37565"/>
    </ligand>
</feature>
<feature type="binding site" evidence="1">
    <location>
        <position position="280"/>
    </location>
    <ligand>
        <name>Zn(2+)</name>
        <dbReference type="ChEBI" id="CHEBI:29105"/>
    </ligand>
</feature>
<feature type="binding site" evidence="1">
    <location>
        <position position="285"/>
    </location>
    <ligand>
        <name>Zn(2+)</name>
        <dbReference type="ChEBI" id="CHEBI:29105"/>
    </ligand>
</feature>
<feature type="binding site" evidence="1">
    <location>
        <position position="287"/>
    </location>
    <ligand>
        <name>Zn(2+)</name>
        <dbReference type="ChEBI" id="CHEBI:29105"/>
    </ligand>
</feature>
<feature type="binding site" evidence="1">
    <location>
        <position position="293"/>
    </location>
    <ligand>
        <name>Zn(2+)</name>
        <dbReference type="ChEBI" id="CHEBI:29105"/>
    </ligand>
</feature>
<accession>Q8YUA3</accession>
<sequence length="370" mass="41447">MRVFTTGQLLGTVVAVQANFYKVQLDQEVREQGSRGAGEEVHLDSPLPLCPLSLLLCTRRTRLKKIGQQVMVGDRVVVEEPDWAGGRGAIADVLSRQTQLDRPPIANADQILLVFAVADPPLEPYQLSRFLVKAETTGLDVVLCLNKSDLVSPEIQQQISDRLLAWGYQPLFISVENQINIDQIAKYLSNKITVVAGPSGVGKSSLINALIPNINLRVGEVSGKLARGRHTTRHVELFELPNGGLLADTPGFNQPDVDCSPEELVHYFPEARERLAIASCRFNDCSHRDEPDCAVRGDWERYEHYLEFLADAIARQTQLYQQADPESTLKLKTKGKGQSQYEPKLESKKYRRTSRRTQVQGLQDLYQEEE</sequence>
<dbReference type="EC" id="3.6.1.-" evidence="1"/>
<dbReference type="EMBL" id="BA000019">
    <property type="protein sequence ID" value="BAB74148.1"/>
    <property type="molecule type" value="Genomic_DNA"/>
</dbReference>
<dbReference type="PIR" id="AB2112">
    <property type="entry name" value="AB2112"/>
</dbReference>
<dbReference type="SMR" id="Q8YUA3"/>
<dbReference type="STRING" id="103690.gene:10494479"/>
<dbReference type="KEGG" id="ana:alr2449"/>
<dbReference type="eggNOG" id="COG1162">
    <property type="taxonomic scope" value="Bacteria"/>
</dbReference>
<dbReference type="OrthoDB" id="9809485at2"/>
<dbReference type="Proteomes" id="UP000002483">
    <property type="component" value="Chromosome"/>
</dbReference>
<dbReference type="GO" id="GO:0005737">
    <property type="term" value="C:cytoplasm"/>
    <property type="evidence" value="ECO:0007669"/>
    <property type="project" value="UniProtKB-SubCell"/>
</dbReference>
<dbReference type="GO" id="GO:0005525">
    <property type="term" value="F:GTP binding"/>
    <property type="evidence" value="ECO:0007669"/>
    <property type="project" value="UniProtKB-UniRule"/>
</dbReference>
<dbReference type="GO" id="GO:0003924">
    <property type="term" value="F:GTPase activity"/>
    <property type="evidence" value="ECO:0007669"/>
    <property type="project" value="UniProtKB-UniRule"/>
</dbReference>
<dbReference type="GO" id="GO:0046872">
    <property type="term" value="F:metal ion binding"/>
    <property type="evidence" value="ECO:0007669"/>
    <property type="project" value="UniProtKB-KW"/>
</dbReference>
<dbReference type="GO" id="GO:0019843">
    <property type="term" value="F:rRNA binding"/>
    <property type="evidence" value="ECO:0007669"/>
    <property type="project" value="UniProtKB-KW"/>
</dbReference>
<dbReference type="GO" id="GO:0042274">
    <property type="term" value="P:ribosomal small subunit biogenesis"/>
    <property type="evidence" value="ECO:0007669"/>
    <property type="project" value="UniProtKB-UniRule"/>
</dbReference>
<dbReference type="CDD" id="cd01854">
    <property type="entry name" value="YjeQ_EngC"/>
    <property type="match status" value="1"/>
</dbReference>
<dbReference type="Gene3D" id="2.40.50.140">
    <property type="entry name" value="Nucleic acid-binding proteins"/>
    <property type="match status" value="1"/>
</dbReference>
<dbReference type="Gene3D" id="3.40.50.300">
    <property type="entry name" value="P-loop containing nucleotide triphosphate hydrolases"/>
    <property type="match status" value="1"/>
</dbReference>
<dbReference type="Gene3D" id="1.10.40.50">
    <property type="entry name" value="Probable gtpase engc, domain 3"/>
    <property type="match status" value="1"/>
</dbReference>
<dbReference type="HAMAP" id="MF_01820">
    <property type="entry name" value="GTPase_RsgA"/>
    <property type="match status" value="1"/>
</dbReference>
<dbReference type="InterPro" id="IPR030378">
    <property type="entry name" value="G_CP_dom"/>
</dbReference>
<dbReference type="InterPro" id="IPR012340">
    <property type="entry name" value="NA-bd_OB-fold"/>
</dbReference>
<dbReference type="InterPro" id="IPR027417">
    <property type="entry name" value="P-loop_NTPase"/>
</dbReference>
<dbReference type="InterPro" id="IPR004881">
    <property type="entry name" value="Ribosome_biogen_GTPase_RsgA"/>
</dbReference>
<dbReference type="InterPro" id="IPR010914">
    <property type="entry name" value="RsgA_GTPase_dom"/>
</dbReference>
<dbReference type="NCBIfam" id="NF008932">
    <property type="entry name" value="PRK12289.1"/>
    <property type="match status" value="1"/>
</dbReference>
<dbReference type="NCBIfam" id="TIGR00157">
    <property type="entry name" value="ribosome small subunit-dependent GTPase A"/>
    <property type="match status" value="1"/>
</dbReference>
<dbReference type="PANTHER" id="PTHR32120">
    <property type="entry name" value="SMALL RIBOSOMAL SUBUNIT BIOGENESIS GTPASE RSGA"/>
    <property type="match status" value="1"/>
</dbReference>
<dbReference type="PANTHER" id="PTHR32120:SF11">
    <property type="entry name" value="SMALL RIBOSOMAL SUBUNIT BIOGENESIS GTPASE RSGA 1, MITOCHONDRIAL-RELATED"/>
    <property type="match status" value="1"/>
</dbReference>
<dbReference type="Pfam" id="PF03193">
    <property type="entry name" value="RsgA_GTPase"/>
    <property type="match status" value="1"/>
</dbReference>
<dbReference type="SUPFAM" id="SSF50249">
    <property type="entry name" value="Nucleic acid-binding proteins"/>
    <property type="match status" value="1"/>
</dbReference>
<dbReference type="SUPFAM" id="SSF52540">
    <property type="entry name" value="P-loop containing nucleoside triphosphate hydrolases"/>
    <property type="match status" value="1"/>
</dbReference>
<dbReference type="PROSITE" id="PS50936">
    <property type="entry name" value="ENGC_GTPASE"/>
    <property type="match status" value="1"/>
</dbReference>
<dbReference type="PROSITE" id="PS51721">
    <property type="entry name" value="G_CP"/>
    <property type="match status" value="1"/>
</dbReference>
<gene>
    <name evidence="1" type="primary">rsgA1</name>
    <name type="ordered locus">alr2449</name>
</gene>
<reference key="1">
    <citation type="journal article" date="2001" name="DNA Res.">
        <title>Complete genomic sequence of the filamentous nitrogen-fixing cyanobacterium Anabaena sp. strain PCC 7120.</title>
        <authorList>
            <person name="Kaneko T."/>
            <person name="Nakamura Y."/>
            <person name="Wolk C.P."/>
            <person name="Kuritz T."/>
            <person name="Sasamoto S."/>
            <person name="Watanabe A."/>
            <person name="Iriguchi M."/>
            <person name="Ishikawa A."/>
            <person name="Kawashima K."/>
            <person name="Kimura T."/>
            <person name="Kishida Y."/>
            <person name="Kohara M."/>
            <person name="Matsumoto M."/>
            <person name="Matsuno A."/>
            <person name="Muraki A."/>
            <person name="Nakazaki N."/>
            <person name="Shimpo S."/>
            <person name="Sugimoto M."/>
            <person name="Takazawa M."/>
            <person name="Yamada M."/>
            <person name="Yasuda M."/>
            <person name="Tabata S."/>
        </authorList>
    </citation>
    <scope>NUCLEOTIDE SEQUENCE [LARGE SCALE GENOMIC DNA]</scope>
    <source>
        <strain>PCC 7120 / SAG 25.82 / UTEX 2576</strain>
    </source>
</reference>
<organism>
    <name type="scientific">Nostoc sp. (strain PCC 7120 / SAG 25.82 / UTEX 2576)</name>
    <dbReference type="NCBI Taxonomy" id="103690"/>
    <lineage>
        <taxon>Bacteria</taxon>
        <taxon>Bacillati</taxon>
        <taxon>Cyanobacteriota</taxon>
        <taxon>Cyanophyceae</taxon>
        <taxon>Nostocales</taxon>
        <taxon>Nostocaceae</taxon>
        <taxon>Nostoc</taxon>
    </lineage>
</organism>
<name>RSGA1_NOSS1</name>
<keyword id="KW-0963">Cytoplasm</keyword>
<keyword id="KW-0342">GTP-binding</keyword>
<keyword id="KW-0378">Hydrolase</keyword>
<keyword id="KW-0479">Metal-binding</keyword>
<keyword id="KW-0547">Nucleotide-binding</keyword>
<keyword id="KW-1185">Reference proteome</keyword>
<keyword id="KW-0690">Ribosome biogenesis</keyword>
<keyword id="KW-0694">RNA-binding</keyword>
<keyword id="KW-0699">rRNA-binding</keyword>
<keyword id="KW-0862">Zinc</keyword>
<evidence type="ECO:0000255" key="1">
    <source>
        <dbReference type="HAMAP-Rule" id="MF_01820"/>
    </source>
</evidence>
<evidence type="ECO:0000255" key="2">
    <source>
        <dbReference type="PROSITE-ProRule" id="PRU01058"/>
    </source>
</evidence>
<evidence type="ECO:0000256" key="3">
    <source>
        <dbReference type="SAM" id="MobiDB-lite"/>
    </source>
</evidence>
<proteinExistence type="inferred from homology"/>
<protein>
    <recommendedName>
        <fullName evidence="1">Small ribosomal subunit biogenesis GTPase RsgA 1</fullName>
        <ecNumber evidence="1">3.6.1.-</ecNumber>
    </recommendedName>
</protein>
<comment type="function">
    <text evidence="1">One of several proteins that assist in the late maturation steps of the functional core of the 30S ribosomal subunit. Helps release RbfA from mature subunits. May play a role in the assembly of ribosomal proteins into the subunit. Circularly permuted GTPase that catalyzes slow GTP hydrolysis, GTPase activity is stimulated by the 30S ribosomal subunit.</text>
</comment>
<comment type="cofactor">
    <cofactor evidence="1">
        <name>Zn(2+)</name>
        <dbReference type="ChEBI" id="CHEBI:29105"/>
    </cofactor>
    <text evidence="1">Binds 1 zinc ion per subunit.</text>
</comment>
<comment type="subunit">
    <text evidence="1">Monomer. Associates with 30S ribosomal subunit, binds 16S rRNA.</text>
</comment>
<comment type="subcellular location">
    <subcellularLocation>
        <location evidence="1">Cytoplasm</location>
    </subcellularLocation>
</comment>
<comment type="similarity">
    <text evidence="1">Belongs to the TRAFAC class YlqF/YawG GTPase family. RsgA subfamily.</text>
</comment>